<keyword id="KW-0997">Cell inner membrane</keyword>
<keyword id="KW-1003">Cell membrane</keyword>
<keyword id="KW-0406">Ion transport</keyword>
<keyword id="KW-0460">Magnesium</keyword>
<keyword id="KW-0472">Membrane</keyword>
<keyword id="KW-0812">Transmembrane</keyword>
<keyword id="KW-1133">Transmembrane helix</keyword>
<keyword id="KW-0813">Transport</keyword>
<name>CORA_SALPA</name>
<reference key="1">
    <citation type="journal article" date="2004" name="Nat. Genet.">
        <title>Comparison of genome degradation in Paratyphi A and Typhi, human-restricted serovars of Salmonella enterica that cause typhoid.</title>
        <authorList>
            <person name="McClelland M."/>
            <person name="Sanderson K.E."/>
            <person name="Clifton S.W."/>
            <person name="Latreille P."/>
            <person name="Porwollik S."/>
            <person name="Sabo A."/>
            <person name="Meyer R."/>
            <person name="Bieri T."/>
            <person name="Ozersky P."/>
            <person name="McLellan M."/>
            <person name="Harkins C.R."/>
            <person name="Wang C."/>
            <person name="Nguyen C."/>
            <person name="Berghoff A."/>
            <person name="Elliott G."/>
            <person name="Kohlberg S."/>
            <person name="Strong C."/>
            <person name="Du F."/>
            <person name="Carter J."/>
            <person name="Kremizki C."/>
            <person name="Layman D."/>
            <person name="Leonard S."/>
            <person name="Sun H."/>
            <person name="Fulton L."/>
            <person name="Nash W."/>
            <person name="Miner T."/>
            <person name="Minx P."/>
            <person name="Delehaunty K."/>
            <person name="Fronick C."/>
            <person name="Magrini V."/>
            <person name="Nhan M."/>
            <person name="Warren W."/>
            <person name="Florea L."/>
            <person name="Spieth J."/>
            <person name="Wilson R.K."/>
        </authorList>
    </citation>
    <scope>NUCLEOTIDE SEQUENCE [LARGE SCALE GENOMIC DNA]</scope>
    <source>
        <strain>ATCC 9150 / SARB42</strain>
    </source>
</reference>
<sequence>MLSAFQLEKNRLTRLEVEESQSLIDAVWVDLVEPDDDERLRVQSELGQSLATRPELEDIEASARFFEDEDGLHIHSFFFFEDAEDHAGNSTVAFTIRDGRLFTLRERELPAFRLYRMRARSQAMVDGNAYELLLDLFETKIEQLADEIENIYSDLEKLSRVIMEGHQGDEYDEALSTLAELEDIGWKVRLCLMDTQRALNFLVRKARLPGGQLEQAREILRDIESLLPHNESLFQKVNFLMQAAMGFINIEQNRIIKIFSVVSVVFLPPTLVASSYGMNFEFMPELKWSFGYPGAIIFMILAGLAPYLYFKRKNWL</sequence>
<gene>
    <name type="primary">corA</name>
    <name type="ordered locus">SPA3793</name>
</gene>
<evidence type="ECO:0000250" key="1">
    <source>
        <dbReference type="UniProtKB" id="P0ABI4"/>
    </source>
</evidence>
<evidence type="ECO:0000250" key="2">
    <source>
        <dbReference type="UniProtKB" id="Q9WZ31"/>
    </source>
</evidence>
<evidence type="ECO:0000255" key="3"/>
<evidence type="ECO:0000305" key="4"/>
<proteinExistence type="inferred from homology"/>
<organism>
    <name type="scientific">Salmonella paratyphi A (strain ATCC 9150 / SARB42)</name>
    <dbReference type="NCBI Taxonomy" id="295319"/>
    <lineage>
        <taxon>Bacteria</taxon>
        <taxon>Pseudomonadati</taxon>
        <taxon>Pseudomonadota</taxon>
        <taxon>Gammaproteobacteria</taxon>
        <taxon>Enterobacterales</taxon>
        <taxon>Enterobacteriaceae</taxon>
        <taxon>Salmonella</taxon>
    </lineage>
</organism>
<comment type="function">
    <text evidence="1 2">Mediates influx of magnesium ions (By similarity) Alternates between open and closed states. Activated by low cytoplasmic Mg(2+) levels. Inactive when cytoplasmic Mg(2+) levels are high (By similarity).</text>
</comment>
<comment type="catalytic activity">
    <reaction evidence="1">
        <text>Mg(2+)(in) = Mg(2+)(out)</text>
        <dbReference type="Rhea" id="RHEA:29827"/>
        <dbReference type="ChEBI" id="CHEBI:18420"/>
    </reaction>
</comment>
<comment type="subunit">
    <text evidence="2">Homopentamer. In the absence of Mg(2+), interactions between subunits are weakened, and dimers, trimers and tetramers can be observed in vitro (By similarity).</text>
</comment>
<comment type="subcellular location">
    <subcellularLocation>
        <location evidence="1">Cell inner membrane</location>
        <topology evidence="2">Multi-pass membrane protein</topology>
    </subcellularLocation>
</comment>
<comment type="domain">
    <text evidence="2">The central ion permeation pathway is formed by the first transmembrane domain from each of the five subunits. Mg(2+) binding strengthens interactions between subunits and leads to the formation of a symmetrical homopentamer surrounding a closed ion permeation pathway. Low Mg(2+) concentrations trigger both a conformation change within each subunit and a loosening of the interactions between subunits. This results in an open ion conduction pathway. In addition, this results in a less symmetrical shape of the whole complex.</text>
</comment>
<comment type="similarity">
    <text evidence="4">Belongs to the CorA metal ion transporter (MIT) (TC 1.A.35) family.</text>
</comment>
<protein>
    <recommendedName>
        <fullName>Magnesium transport protein CorA</fullName>
    </recommendedName>
</protein>
<feature type="chain" id="PRO_0000239102" description="Magnesium transport protein CorA">
    <location>
        <begin position="1"/>
        <end position="316"/>
    </location>
</feature>
<feature type="transmembrane region" description="Helical" evidence="3">
    <location>
        <begin position="258"/>
        <end position="278"/>
    </location>
</feature>
<feature type="transmembrane region" description="Helical" evidence="3">
    <location>
        <begin position="290"/>
        <end position="310"/>
    </location>
</feature>
<feature type="short sequence motif" description="Probable selectivity filter" evidence="2">
    <location>
        <begin position="277"/>
        <end position="279"/>
    </location>
</feature>
<feature type="site" description="Essential for ion permeation" evidence="2">
    <location>
        <position position="253"/>
    </location>
</feature>
<accession>Q5PKM1</accession>
<dbReference type="EMBL" id="CP000026">
    <property type="protein sequence ID" value="AAV79569.1"/>
    <property type="molecule type" value="Genomic_DNA"/>
</dbReference>
<dbReference type="RefSeq" id="WP_000947139.1">
    <property type="nucleotide sequence ID" value="NC_006511.1"/>
</dbReference>
<dbReference type="SMR" id="Q5PKM1"/>
<dbReference type="KEGG" id="spt:SPA3793"/>
<dbReference type="HOGENOM" id="CLU_007127_5_0_6"/>
<dbReference type="Proteomes" id="UP000008185">
    <property type="component" value="Chromosome"/>
</dbReference>
<dbReference type="GO" id="GO:0005886">
    <property type="term" value="C:plasma membrane"/>
    <property type="evidence" value="ECO:0007669"/>
    <property type="project" value="UniProtKB-SubCell"/>
</dbReference>
<dbReference type="GO" id="GO:0015087">
    <property type="term" value="F:cobalt ion transmembrane transporter activity"/>
    <property type="evidence" value="ECO:0007669"/>
    <property type="project" value="InterPro"/>
</dbReference>
<dbReference type="GO" id="GO:0015095">
    <property type="term" value="F:magnesium ion transmembrane transporter activity"/>
    <property type="evidence" value="ECO:0007669"/>
    <property type="project" value="InterPro"/>
</dbReference>
<dbReference type="GO" id="GO:0015099">
    <property type="term" value="F:nickel cation transmembrane transporter activity"/>
    <property type="evidence" value="ECO:0007669"/>
    <property type="project" value="TreeGrafter"/>
</dbReference>
<dbReference type="CDD" id="cd12835">
    <property type="entry name" value="EcCorA-like_1"/>
    <property type="match status" value="1"/>
</dbReference>
<dbReference type="FunFam" id="1.20.58.340:FF:000001">
    <property type="entry name" value="Magnesium transport protein CorA"/>
    <property type="match status" value="1"/>
</dbReference>
<dbReference type="Gene3D" id="1.20.58.340">
    <property type="entry name" value="Magnesium transport protein CorA, transmembrane region"/>
    <property type="match status" value="1"/>
</dbReference>
<dbReference type="InterPro" id="IPR045861">
    <property type="entry name" value="CorA_cytoplasmic_dom"/>
</dbReference>
<dbReference type="InterPro" id="IPR050829">
    <property type="entry name" value="CorA_MIT"/>
</dbReference>
<dbReference type="InterPro" id="IPR045863">
    <property type="entry name" value="CorA_TM1_TM2"/>
</dbReference>
<dbReference type="InterPro" id="IPR004488">
    <property type="entry name" value="Mg/Co-transport_prot_CorA"/>
</dbReference>
<dbReference type="InterPro" id="IPR002523">
    <property type="entry name" value="MgTranspt_CorA/ZnTranspt_ZntB"/>
</dbReference>
<dbReference type="NCBIfam" id="TIGR00383">
    <property type="entry name" value="corA"/>
    <property type="match status" value="1"/>
</dbReference>
<dbReference type="PANTHER" id="PTHR47685">
    <property type="entry name" value="MAGNESIUM TRANSPORT PROTEIN CORA"/>
    <property type="match status" value="1"/>
</dbReference>
<dbReference type="PANTHER" id="PTHR47685:SF1">
    <property type="entry name" value="MAGNESIUM TRANSPORT PROTEIN CORA"/>
    <property type="match status" value="1"/>
</dbReference>
<dbReference type="Pfam" id="PF01544">
    <property type="entry name" value="CorA"/>
    <property type="match status" value="1"/>
</dbReference>
<dbReference type="SUPFAM" id="SSF143865">
    <property type="entry name" value="CorA soluble domain-like"/>
    <property type="match status" value="1"/>
</dbReference>
<dbReference type="SUPFAM" id="SSF144083">
    <property type="entry name" value="Magnesium transport protein CorA, transmembrane region"/>
    <property type="match status" value="1"/>
</dbReference>